<dbReference type="EC" id="3.1.-.-" evidence="1"/>
<dbReference type="EMBL" id="CP001404">
    <property type="protein sequence ID" value="ACP47880.1"/>
    <property type="molecule type" value="Genomic_DNA"/>
</dbReference>
<dbReference type="RefSeq" id="WP_012714149.1">
    <property type="nucleotide sequence ID" value="NC_012623.1"/>
</dbReference>
<dbReference type="SMR" id="C3NMR0"/>
<dbReference type="GeneID" id="7811181"/>
<dbReference type="KEGG" id="sin:YN1551_0755"/>
<dbReference type="HOGENOM" id="CLU_023334_0_0_2"/>
<dbReference type="Proteomes" id="UP000006818">
    <property type="component" value="Chromosome"/>
</dbReference>
<dbReference type="GO" id="GO:0005737">
    <property type="term" value="C:cytoplasm"/>
    <property type="evidence" value="ECO:0007669"/>
    <property type="project" value="UniProtKB-SubCell"/>
</dbReference>
<dbReference type="GO" id="GO:0004519">
    <property type="term" value="F:endonuclease activity"/>
    <property type="evidence" value="ECO:0007669"/>
    <property type="project" value="UniProtKB-UniRule"/>
</dbReference>
<dbReference type="GO" id="GO:0046872">
    <property type="term" value="F:metal ion binding"/>
    <property type="evidence" value="ECO:0007669"/>
    <property type="project" value="UniProtKB-UniRule"/>
</dbReference>
<dbReference type="GO" id="GO:0070651">
    <property type="term" value="P:nonfunctional rRNA decay"/>
    <property type="evidence" value="ECO:0007669"/>
    <property type="project" value="TreeGrafter"/>
</dbReference>
<dbReference type="GO" id="GO:0070966">
    <property type="term" value="P:nuclear-transcribed mRNA catabolic process, no-go decay"/>
    <property type="evidence" value="ECO:0007669"/>
    <property type="project" value="InterPro"/>
</dbReference>
<dbReference type="GO" id="GO:0070481">
    <property type="term" value="P:nuclear-transcribed mRNA catabolic process, non-stop decay"/>
    <property type="evidence" value="ECO:0007669"/>
    <property type="project" value="InterPro"/>
</dbReference>
<dbReference type="GO" id="GO:0032790">
    <property type="term" value="P:ribosome disassembly"/>
    <property type="evidence" value="ECO:0007669"/>
    <property type="project" value="TreeGrafter"/>
</dbReference>
<dbReference type="GO" id="GO:0071025">
    <property type="term" value="P:RNA surveillance"/>
    <property type="evidence" value="ECO:0007669"/>
    <property type="project" value="InterPro"/>
</dbReference>
<dbReference type="FunFam" id="2.30.30.870:FF:000002">
    <property type="entry name" value="Protein pelota homolog"/>
    <property type="match status" value="1"/>
</dbReference>
<dbReference type="FunFam" id="3.30.420.60:FF:000005">
    <property type="entry name" value="Protein pelota homolog"/>
    <property type="match status" value="1"/>
</dbReference>
<dbReference type="Gene3D" id="3.30.1330.30">
    <property type="match status" value="1"/>
</dbReference>
<dbReference type="Gene3D" id="3.30.420.60">
    <property type="entry name" value="eRF1 domain 2"/>
    <property type="match status" value="1"/>
</dbReference>
<dbReference type="Gene3D" id="2.30.30.870">
    <property type="entry name" value="Pelota, domain A"/>
    <property type="match status" value="1"/>
</dbReference>
<dbReference type="HAMAP" id="MF_01853">
    <property type="entry name" value="PelO"/>
    <property type="match status" value="1"/>
</dbReference>
<dbReference type="InterPro" id="IPR042226">
    <property type="entry name" value="eFR1_2_sf"/>
</dbReference>
<dbReference type="InterPro" id="IPR005140">
    <property type="entry name" value="eRF1_1_Pelota"/>
</dbReference>
<dbReference type="InterPro" id="IPR005142">
    <property type="entry name" value="eRF1_3"/>
</dbReference>
<dbReference type="InterPro" id="IPR038069">
    <property type="entry name" value="Pelota/DOM34_N"/>
</dbReference>
<dbReference type="InterPro" id="IPR023521">
    <property type="entry name" value="Pelota_arc"/>
</dbReference>
<dbReference type="InterPro" id="IPR029064">
    <property type="entry name" value="Ribosomal_eL30-like_sf"/>
</dbReference>
<dbReference type="InterPro" id="IPR004405">
    <property type="entry name" value="Transl-rel_pelota"/>
</dbReference>
<dbReference type="NCBIfam" id="TIGR00111">
    <property type="entry name" value="pelota"/>
    <property type="match status" value="1"/>
</dbReference>
<dbReference type="PANTHER" id="PTHR10853">
    <property type="entry name" value="PELOTA"/>
    <property type="match status" value="1"/>
</dbReference>
<dbReference type="PANTHER" id="PTHR10853:SF0">
    <property type="entry name" value="PROTEIN PELOTA HOMOLOG"/>
    <property type="match status" value="1"/>
</dbReference>
<dbReference type="Pfam" id="PF03463">
    <property type="entry name" value="eRF1_1"/>
    <property type="match status" value="1"/>
</dbReference>
<dbReference type="Pfam" id="PF03465">
    <property type="entry name" value="eRF1_3"/>
    <property type="match status" value="1"/>
</dbReference>
<dbReference type="SMART" id="SM01194">
    <property type="entry name" value="eRF1_1"/>
    <property type="match status" value="1"/>
</dbReference>
<dbReference type="SUPFAM" id="SSF159065">
    <property type="entry name" value="Dom34/Pelota N-terminal domain-like"/>
    <property type="match status" value="1"/>
</dbReference>
<dbReference type="SUPFAM" id="SSF55315">
    <property type="entry name" value="L30e-like"/>
    <property type="match status" value="1"/>
</dbReference>
<dbReference type="SUPFAM" id="SSF53137">
    <property type="entry name" value="Translational machinery components"/>
    <property type="match status" value="1"/>
</dbReference>
<gene>
    <name evidence="1" type="primary">pelA</name>
    <name type="ordered locus">YN1551_0755</name>
</gene>
<name>PELO_SACI1</name>
<reference key="1">
    <citation type="journal article" date="2009" name="Proc. Natl. Acad. Sci. U.S.A.">
        <title>Biogeography of the Sulfolobus islandicus pan-genome.</title>
        <authorList>
            <person name="Reno M.L."/>
            <person name="Held N.L."/>
            <person name="Fields C.J."/>
            <person name="Burke P.V."/>
            <person name="Whitaker R.J."/>
        </authorList>
    </citation>
    <scope>NUCLEOTIDE SEQUENCE [LARGE SCALE GENOMIC DNA]</scope>
    <source>
        <strain>Y.N.15.51 / Yellowstone #2</strain>
    </source>
</reference>
<protein>
    <recommendedName>
        <fullName evidence="1">Protein pelota homolog</fullName>
        <ecNumber evidence="1">3.1.-.-</ecNumber>
    </recommendedName>
</protein>
<sequence length="344" mass="39399">MRILEFDEKRQAAKLHIESEDDLWILHLILEKGDKVVAKTTRDIGLGKESRRIPMTIVLKVDYTEFQEFTNRLRIHGIIEDAPERFGIRGAHHTINLDIGDEIIIIKQQWNKYALDKLKKQADKRSKIIIALVDFDEYLIAIPFEQGIKILSEKSLRSLNEEEGIIEQNALEVATELAEYVKQYNPDAILLAGPGFFKEEVAKKVNNILKNKKVYIDSVSSATRAGLHEILKRDIIDKIMSDYEIAIGAKKMEKAMELLAKQPELVTYGLEQVKNAVEMGAVETVLLIEDLLSSNNQERLAIERILEDIENKRGEIILVPKESPIYFELKNLTGILAILRFRIN</sequence>
<comment type="function">
    <text evidence="1">May function in recognizing stalled ribosomes, interact with stem-loop structures in stalled mRNA molecules, and effect endonucleolytic cleavage of the mRNA. May play a role in the release non-functional ribosomes and degradation of damaged mRNAs. Has endoribonuclease activity.</text>
</comment>
<comment type="cofactor">
    <cofactor evidence="1">
        <name>a divalent metal cation</name>
        <dbReference type="ChEBI" id="CHEBI:60240"/>
    </cofactor>
</comment>
<comment type="subunit">
    <text evidence="1">Monomer.</text>
</comment>
<comment type="subcellular location">
    <subcellularLocation>
        <location evidence="1">Cytoplasm</location>
    </subcellularLocation>
</comment>
<comment type="domain">
    <text evidence="1">The N-terminal domain has the RNA-binding Sm fold. It harbors the endoribonuclease activity.</text>
</comment>
<comment type="similarity">
    <text evidence="1">Belongs to the eukaryotic release factor 1 family. Pelota subfamily.</text>
</comment>
<proteinExistence type="inferred from homology"/>
<keyword id="KW-0963">Cytoplasm</keyword>
<keyword id="KW-0255">Endonuclease</keyword>
<keyword id="KW-0378">Hydrolase</keyword>
<keyword id="KW-0479">Metal-binding</keyword>
<keyword id="KW-0540">Nuclease</keyword>
<evidence type="ECO:0000255" key="1">
    <source>
        <dbReference type="HAMAP-Rule" id="MF_01853"/>
    </source>
</evidence>
<feature type="chain" id="PRO_1000216142" description="Protein pelota homolog">
    <location>
        <begin position="1"/>
        <end position="344"/>
    </location>
</feature>
<organism>
    <name type="scientific">Saccharolobus islandicus (strain Y.N.15.51 / Yellowstone #2)</name>
    <name type="common">Sulfolobus islandicus</name>
    <dbReference type="NCBI Taxonomy" id="419942"/>
    <lineage>
        <taxon>Archaea</taxon>
        <taxon>Thermoproteota</taxon>
        <taxon>Thermoprotei</taxon>
        <taxon>Sulfolobales</taxon>
        <taxon>Sulfolobaceae</taxon>
        <taxon>Saccharolobus</taxon>
    </lineage>
</organism>
<accession>C3NMR0</accession>